<gene>
    <name evidence="1" type="primary">grpE</name>
    <name type="ordered locus">Ppro_1405</name>
</gene>
<evidence type="ECO:0000255" key="1">
    <source>
        <dbReference type="HAMAP-Rule" id="MF_01151"/>
    </source>
</evidence>
<evidence type="ECO:0000256" key="2">
    <source>
        <dbReference type="SAM" id="MobiDB-lite"/>
    </source>
</evidence>
<accession>A1ANV1</accession>
<sequence length="190" mass="21281">MKKHVTEEQKTSAAPEAEQASPESSAAEAATPEERISRLEEQLAAKEAECRENWDRFVRERADLENFRKRSNREKEELLNYGTKSLLEEILPVVDNLERALSHANENGSTGLTEGVQMIHGLLLNAMKKFGVTPLETSGAPFDPSFHQAMTQIPTDEHPPNTVVEEFQKGYLLKERLLRPAMVSVATAPK</sequence>
<keyword id="KW-0143">Chaperone</keyword>
<keyword id="KW-0963">Cytoplasm</keyword>
<keyword id="KW-1185">Reference proteome</keyword>
<keyword id="KW-0346">Stress response</keyword>
<feature type="chain" id="PRO_1000053611" description="Protein GrpE">
    <location>
        <begin position="1"/>
        <end position="190"/>
    </location>
</feature>
<feature type="region of interest" description="Disordered" evidence="2">
    <location>
        <begin position="1"/>
        <end position="42"/>
    </location>
</feature>
<feature type="compositionally biased region" description="Basic and acidic residues" evidence="2">
    <location>
        <begin position="1"/>
        <end position="10"/>
    </location>
</feature>
<feature type="compositionally biased region" description="Low complexity" evidence="2">
    <location>
        <begin position="12"/>
        <end position="30"/>
    </location>
</feature>
<feature type="compositionally biased region" description="Basic and acidic residues" evidence="2">
    <location>
        <begin position="32"/>
        <end position="42"/>
    </location>
</feature>
<name>GRPE_PELPD</name>
<organism>
    <name type="scientific">Pelobacter propionicus (strain DSM 2379 / NBRC 103807 / OttBd1)</name>
    <dbReference type="NCBI Taxonomy" id="338966"/>
    <lineage>
        <taxon>Bacteria</taxon>
        <taxon>Pseudomonadati</taxon>
        <taxon>Thermodesulfobacteriota</taxon>
        <taxon>Desulfuromonadia</taxon>
        <taxon>Desulfuromonadales</taxon>
        <taxon>Desulfuromonadaceae</taxon>
        <taxon>Pelobacter</taxon>
    </lineage>
</organism>
<reference key="1">
    <citation type="submission" date="2006-10" db="EMBL/GenBank/DDBJ databases">
        <title>Complete sequence of chromosome of Pelobacter propionicus DSM 2379.</title>
        <authorList>
            <consortium name="US DOE Joint Genome Institute"/>
            <person name="Copeland A."/>
            <person name="Lucas S."/>
            <person name="Lapidus A."/>
            <person name="Barry K."/>
            <person name="Detter J.C."/>
            <person name="Glavina del Rio T."/>
            <person name="Hammon N."/>
            <person name="Israni S."/>
            <person name="Dalin E."/>
            <person name="Tice H."/>
            <person name="Pitluck S."/>
            <person name="Saunders E."/>
            <person name="Brettin T."/>
            <person name="Bruce D."/>
            <person name="Han C."/>
            <person name="Tapia R."/>
            <person name="Schmutz J."/>
            <person name="Larimer F."/>
            <person name="Land M."/>
            <person name="Hauser L."/>
            <person name="Kyrpides N."/>
            <person name="Kim E."/>
            <person name="Lovley D."/>
            <person name="Richardson P."/>
        </authorList>
    </citation>
    <scope>NUCLEOTIDE SEQUENCE [LARGE SCALE GENOMIC DNA]</scope>
    <source>
        <strain>DSM 2379 / NBRC 103807 / OttBd1</strain>
    </source>
</reference>
<proteinExistence type="inferred from homology"/>
<dbReference type="EMBL" id="CP000482">
    <property type="protein sequence ID" value="ABK99021.1"/>
    <property type="molecule type" value="Genomic_DNA"/>
</dbReference>
<dbReference type="RefSeq" id="WP_011735314.1">
    <property type="nucleotide sequence ID" value="NC_008609.1"/>
</dbReference>
<dbReference type="SMR" id="A1ANV1"/>
<dbReference type="STRING" id="338966.Ppro_1405"/>
<dbReference type="KEGG" id="ppd:Ppro_1405"/>
<dbReference type="eggNOG" id="COG0576">
    <property type="taxonomic scope" value="Bacteria"/>
</dbReference>
<dbReference type="HOGENOM" id="CLU_057217_6_0_7"/>
<dbReference type="OrthoDB" id="9789811at2"/>
<dbReference type="Proteomes" id="UP000006732">
    <property type="component" value="Chromosome"/>
</dbReference>
<dbReference type="GO" id="GO:0005829">
    <property type="term" value="C:cytosol"/>
    <property type="evidence" value="ECO:0007669"/>
    <property type="project" value="TreeGrafter"/>
</dbReference>
<dbReference type="GO" id="GO:0000774">
    <property type="term" value="F:adenyl-nucleotide exchange factor activity"/>
    <property type="evidence" value="ECO:0007669"/>
    <property type="project" value="InterPro"/>
</dbReference>
<dbReference type="GO" id="GO:0042803">
    <property type="term" value="F:protein homodimerization activity"/>
    <property type="evidence" value="ECO:0007669"/>
    <property type="project" value="InterPro"/>
</dbReference>
<dbReference type="GO" id="GO:0051087">
    <property type="term" value="F:protein-folding chaperone binding"/>
    <property type="evidence" value="ECO:0007669"/>
    <property type="project" value="InterPro"/>
</dbReference>
<dbReference type="GO" id="GO:0051082">
    <property type="term" value="F:unfolded protein binding"/>
    <property type="evidence" value="ECO:0007669"/>
    <property type="project" value="TreeGrafter"/>
</dbReference>
<dbReference type="GO" id="GO:0006457">
    <property type="term" value="P:protein folding"/>
    <property type="evidence" value="ECO:0007669"/>
    <property type="project" value="InterPro"/>
</dbReference>
<dbReference type="CDD" id="cd00446">
    <property type="entry name" value="GrpE"/>
    <property type="match status" value="1"/>
</dbReference>
<dbReference type="FunFam" id="2.30.22.10:FF:000001">
    <property type="entry name" value="Protein GrpE"/>
    <property type="match status" value="1"/>
</dbReference>
<dbReference type="Gene3D" id="3.90.20.20">
    <property type="match status" value="1"/>
</dbReference>
<dbReference type="Gene3D" id="2.30.22.10">
    <property type="entry name" value="Head domain of nucleotide exchange factor GrpE"/>
    <property type="match status" value="1"/>
</dbReference>
<dbReference type="HAMAP" id="MF_01151">
    <property type="entry name" value="GrpE"/>
    <property type="match status" value="1"/>
</dbReference>
<dbReference type="InterPro" id="IPR000740">
    <property type="entry name" value="GrpE"/>
</dbReference>
<dbReference type="InterPro" id="IPR013805">
    <property type="entry name" value="GrpE_coiled_coil"/>
</dbReference>
<dbReference type="InterPro" id="IPR009012">
    <property type="entry name" value="GrpE_head"/>
</dbReference>
<dbReference type="NCBIfam" id="NF010738">
    <property type="entry name" value="PRK14140.1"/>
    <property type="match status" value="1"/>
</dbReference>
<dbReference type="NCBIfam" id="NF010748">
    <property type="entry name" value="PRK14150.1"/>
    <property type="match status" value="1"/>
</dbReference>
<dbReference type="NCBIfam" id="NF010755">
    <property type="entry name" value="PRK14158.1"/>
    <property type="match status" value="1"/>
</dbReference>
<dbReference type="PANTHER" id="PTHR21237">
    <property type="entry name" value="GRPE PROTEIN"/>
    <property type="match status" value="1"/>
</dbReference>
<dbReference type="PANTHER" id="PTHR21237:SF23">
    <property type="entry name" value="GRPE PROTEIN HOMOLOG, MITOCHONDRIAL"/>
    <property type="match status" value="1"/>
</dbReference>
<dbReference type="Pfam" id="PF01025">
    <property type="entry name" value="GrpE"/>
    <property type="match status" value="1"/>
</dbReference>
<dbReference type="PRINTS" id="PR00773">
    <property type="entry name" value="GRPEPROTEIN"/>
</dbReference>
<dbReference type="SUPFAM" id="SSF58014">
    <property type="entry name" value="Coiled-coil domain of nucleotide exchange factor GrpE"/>
    <property type="match status" value="1"/>
</dbReference>
<dbReference type="SUPFAM" id="SSF51064">
    <property type="entry name" value="Head domain of nucleotide exchange factor GrpE"/>
    <property type="match status" value="1"/>
</dbReference>
<dbReference type="PROSITE" id="PS01071">
    <property type="entry name" value="GRPE"/>
    <property type="match status" value="1"/>
</dbReference>
<protein>
    <recommendedName>
        <fullName evidence="1">Protein GrpE</fullName>
    </recommendedName>
    <alternativeName>
        <fullName evidence="1">HSP-70 cofactor</fullName>
    </alternativeName>
</protein>
<comment type="function">
    <text evidence="1">Participates actively in the response to hyperosmotic and heat shock by preventing the aggregation of stress-denatured proteins, in association with DnaK and GrpE. It is the nucleotide exchange factor for DnaK and may function as a thermosensor. Unfolded proteins bind initially to DnaJ; upon interaction with the DnaJ-bound protein, DnaK hydrolyzes its bound ATP, resulting in the formation of a stable complex. GrpE releases ADP from DnaK; ATP binding to DnaK triggers the release of the substrate protein, thus completing the reaction cycle. Several rounds of ATP-dependent interactions between DnaJ, DnaK and GrpE are required for fully efficient folding.</text>
</comment>
<comment type="subunit">
    <text evidence="1">Homodimer.</text>
</comment>
<comment type="subcellular location">
    <subcellularLocation>
        <location evidence="1">Cytoplasm</location>
    </subcellularLocation>
</comment>
<comment type="similarity">
    <text evidence="1">Belongs to the GrpE family.</text>
</comment>